<proteinExistence type="evidence at transcript level"/>
<dbReference type="EC" id="2.2.1.2" evidence="1"/>
<dbReference type="EMBL" id="AF128242">
    <property type="protein sequence ID" value="AAL55523.1"/>
    <property type="molecule type" value="mRNA"/>
</dbReference>
<dbReference type="SMR" id="Q8VI73"/>
<dbReference type="PaxDb" id="10029-NP_001233704.1"/>
<dbReference type="eggNOG" id="KOG2772">
    <property type="taxonomic scope" value="Eukaryota"/>
</dbReference>
<dbReference type="UniPathway" id="UPA00115">
    <property type="reaction ID" value="UER00414"/>
</dbReference>
<dbReference type="Proteomes" id="UP000694386">
    <property type="component" value="Unplaced"/>
</dbReference>
<dbReference type="Proteomes" id="UP001108280">
    <property type="component" value="Unplaced"/>
</dbReference>
<dbReference type="GO" id="GO:0005737">
    <property type="term" value="C:cytoplasm"/>
    <property type="evidence" value="ECO:0000250"/>
    <property type="project" value="UniProtKB"/>
</dbReference>
<dbReference type="GO" id="GO:0005634">
    <property type="term" value="C:nucleus"/>
    <property type="evidence" value="ECO:0000250"/>
    <property type="project" value="UniProtKB"/>
</dbReference>
<dbReference type="GO" id="GO:0042802">
    <property type="term" value="F:identical protein binding"/>
    <property type="evidence" value="ECO:0000250"/>
    <property type="project" value="UniProtKB"/>
</dbReference>
<dbReference type="GO" id="GO:0004801">
    <property type="term" value="F:transaldolase activity"/>
    <property type="evidence" value="ECO:0000250"/>
    <property type="project" value="UniProtKB"/>
</dbReference>
<dbReference type="GO" id="GO:0005975">
    <property type="term" value="P:carbohydrate metabolic process"/>
    <property type="evidence" value="ECO:0007669"/>
    <property type="project" value="InterPro"/>
</dbReference>
<dbReference type="GO" id="GO:0006098">
    <property type="term" value="P:pentose-phosphate shunt"/>
    <property type="evidence" value="ECO:0000250"/>
    <property type="project" value="UniProtKB"/>
</dbReference>
<dbReference type="GO" id="GO:0009052">
    <property type="term" value="P:pentose-phosphate shunt, non-oxidative branch"/>
    <property type="evidence" value="ECO:0007669"/>
    <property type="project" value="TreeGrafter"/>
</dbReference>
<dbReference type="CDD" id="cd00957">
    <property type="entry name" value="Transaldolase_TalAB"/>
    <property type="match status" value="1"/>
</dbReference>
<dbReference type="FunFam" id="3.20.20.70:FF:000002">
    <property type="entry name" value="Transaldolase"/>
    <property type="match status" value="1"/>
</dbReference>
<dbReference type="Gene3D" id="3.20.20.70">
    <property type="entry name" value="Aldolase class I"/>
    <property type="match status" value="1"/>
</dbReference>
<dbReference type="HAMAP" id="MF_00492">
    <property type="entry name" value="Transaldolase_1"/>
    <property type="match status" value="1"/>
</dbReference>
<dbReference type="InterPro" id="IPR013785">
    <property type="entry name" value="Aldolase_TIM"/>
</dbReference>
<dbReference type="InterPro" id="IPR001585">
    <property type="entry name" value="TAL/FSA"/>
</dbReference>
<dbReference type="InterPro" id="IPR004730">
    <property type="entry name" value="Transaldolase_1"/>
</dbReference>
<dbReference type="InterPro" id="IPR018225">
    <property type="entry name" value="Transaldolase_AS"/>
</dbReference>
<dbReference type="NCBIfam" id="NF009001">
    <property type="entry name" value="PRK12346.1"/>
    <property type="match status" value="1"/>
</dbReference>
<dbReference type="NCBIfam" id="TIGR00874">
    <property type="entry name" value="talAB"/>
    <property type="match status" value="1"/>
</dbReference>
<dbReference type="PANTHER" id="PTHR10683">
    <property type="entry name" value="TRANSALDOLASE"/>
    <property type="match status" value="1"/>
</dbReference>
<dbReference type="PANTHER" id="PTHR10683:SF18">
    <property type="entry name" value="TRANSALDOLASE"/>
    <property type="match status" value="1"/>
</dbReference>
<dbReference type="Pfam" id="PF00923">
    <property type="entry name" value="TAL_FSA"/>
    <property type="match status" value="1"/>
</dbReference>
<dbReference type="SUPFAM" id="SSF51569">
    <property type="entry name" value="Aldolase"/>
    <property type="match status" value="1"/>
</dbReference>
<dbReference type="PROSITE" id="PS01054">
    <property type="entry name" value="TRANSALDOLASE_1"/>
    <property type="match status" value="1"/>
</dbReference>
<dbReference type="PROSITE" id="PS00958">
    <property type="entry name" value="TRANSALDOLASE_2"/>
    <property type="match status" value="1"/>
</dbReference>
<keyword id="KW-0007">Acetylation</keyword>
<keyword id="KW-0963">Cytoplasm</keyword>
<keyword id="KW-0539">Nucleus</keyword>
<keyword id="KW-0570">Pentose shunt</keyword>
<keyword id="KW-0597">Phosphoprotein</keyword>
<keyword id="KW-0704">Schiff base</keyword>
<keyword id="KW-0808">Transferase</keyword>
<reference evidence="4" key="1">
    <citation type="submission" date="1999-02" db="EMBL/GenBank/DDBJ databases">
        <authorList>
            <person name="Perl A."/>
            <person name="Banki K."/>
        </authorList>
    </citation>
    <scope>NUCLEOTIDE SEQUENCE [MRNA]</scope>
    <source>
        <tissue evidence="4">Ovary</tissue>
    </source>
</reference>
<comment type="function">
    <text evidence="2">Catalyzes the rate-limiting step of the non-oxidative phase in the pentose phosphate pathway. Catalyzes the reversible conversion of sedheptulose-7-phosphate and D-glyceraldehyde 3-phosphate into erythrose-4-phosphate and beta-D-fructose 6-phosphate.</text>
</comment>
<comment type="catalytic activity">
    <reaction evidence="1">
        <text>D-sedoheptulose 7-phosphate + D-glyceraldehyde 3-phosphate = D-erythrose 4-phosphate + beta-D-fructose 6-phosphate</text>
        <dbReference type="Rhea" id="RHEA:17053"/>
        <dbReference type="ChEBI" id="CHEBI:16897"/>
        <dbReference type="ChEBI" id="CHEBI:57483"/>
        <dbReference type="ChEBI" id="CHEBI:57634"/>
        <dbReference type="ChEBI" id="CHEBI:59776"/>
        <dbReference type="EC" id="2.2.1.2"/>
    </reaction>
    <physiologicalReaction direction="left-to-right" evidence="1">
        <dbReference type="Rhea" id="RHEA:17054"/>
    </physiologicalReaction>
    <physiologicalReaction direction="right-to-left" evidence="1">
        <dbReference type="Rhea" id="RHEA:17055"/>
    </physiologicalReaction>
</comment>
<comment type="pathway">
    <text evidence="2">Carbohydrate degradation; pentose phosphate pathway; D-glyceraldehyde 3-phosphate and beta-D-fructose 6-phosphate from D-ribose 5-phosphate and D-xylulose 5-phosphate (non-oxidative stage): step 2/3.</text>
</comment>
<comment type="subunit">
    <text evidence="2">Homodimer. Interacts with KPNA1 and KPNA4.</text>
</comment>
<comment type="subcellular location">
    <subcellularLocation>
        <location evidence="2">Nucleus</location>
    </subcellularLocation>
    <subcellularLocation>
        <location evidence="2">Cytoplasm</location>
    </subcellularLocation>
    <text evidence="2">Shuttles between the nucleus and the cytoplasm. Actively transported into the nucleus in an importin alpha/beta-dependent manner. Exported into the cytoplasm by CRM1.</text>
</comment>
<comment type="domain">
    <text evidence="2">The first 10 amino acids are essential for nuclear localization.</text>
</comment>
<comment type="similarity">
    <text evidence="3">Belongs to the transaldolase family. Type 1 subfamily.</text>
</comment>
<accession>Q8VI73</accession>
<gene>
    <name type="primary">TALDO1</name>
</gene>
<organism evidence="4">
    <name type="scientific">Cricetulus griseus</name>
    <name type="common">Chinese hamster</name>
    <name type="synonym">Cricetulus barabensis griseus</name>
    <dbReference type="NCBI Taxonomy" id="10029"/>
    <lineage>
        <taxon>Eukaryota</taxon>
        <taxon>Metazoa</taxon>
        <taxon>Chordata</taxon>
        <taxon>Craniata</taxon>
        <taxon>Vertebrata</taxon>
        <taxon>Euteleostomi</taxon>
        <taxon>Mammalia</taxon>
        <taxon>Eutheria</taxon>
        <taxon>Euarchontoglires</taxon>
        <taxon>Glires</taxon>
        <taxon>Rodentia</taxon>
        <taxon>Myomorpha</taxon>
        <taxon>Muroidea</taxon>
        <taxon>Cricetidae</taxon>
        <taxon>Cricetinae</taxon>
        <taxon>Cricetulus</taxon>
    </lineage>
</organism>
<protein>
    <recommendedName>
        <fullName>Transaldolase</fullName>
        <ecNumber evidence="1">2.2.1.2</ecNumber>
    </recommendedName>
</protein>
<evidence type="ECO:0000250" key="1">
    <source>
        <dbReference type="UniProtKB" id="P37837"/>
    </source>
</evidence>
<evidence type="ECO:0000250" key="2">
    <source>
        <dbReference type="UniProtKB" id="Q93092"/>
    </source>
</evidence>
<evidence type="ECO:0000305" key="3"/>
<evidence type="ECO:0000312" key="4">
    <source>
        <dbReference type="EMBL" id="AAL55523.1"/>
    </source>
</evidence>
<name>TALDO_CRIGR</name>
<feature type="chain" id="PRO_0000173563" description="Transaldolase">
    <location>
        <begin position="1"/>
        <end position="337"/>
    </location>
</feature>
<feature type="short sequence motif" description="Nuclear localization signal" evidence="2">
    <location>
        <begin position="1"/>
        <end position="10"/>
    </location>
</feature>
<feature type="active site" description="Schiff-base intermediate with substrate" evidence="1">
    <location>
        <position position="142"/>
    </location>
</feature>
<feature type="modified residue" description="N6-acetyllysine" evidence="2">
    <location>
        <position position="115"/>
    </location>
</feature>
<feature type="modified residue" description="N6-acetyllysine" evidence="1">
    <location>
        <position position="219"/>
    </location>
</feature>
<feature type="modified residue" description="Phosphoserine" evidence="1">
    <location>
        <position position="237"/>
    </location>
</feature>
<feature type="modified residue" description="Phosphoserine" evidence="1">
    <location>
        <position position="256"/>
    </location>
</feature>
<feature type="modified residue" description="N6-acetyllysine" evidence="1">
    <location>
        <position position="269"/>
    </location>
</feature>
<feature type="modified residue" description="N6-acetyllysine" evidence="1">
    <location>
        <position position="286"/>
    </location>
</feature>
<feature type="modified residue" description="N6-acetyllysine" evidence="1">
    <location>
        <position position="321"/>
    </location>
</feature>
<sequence length="337" mass="37386">MSGSPVKRQRMESALDQLKQFTTVVADTGDFNAIDEYKPQDATTNPSLILAAAQMPAYQELVEEAIAYGKKLGGPQEEQIKNAIDKLFVLFGAEILKKIPGRVSTEVDARLSFDKDAMVARAKRLIELYKEAGISKDRILIKLSSTWEGIQAGKELEEQHGIHCNMTLLFSFAQAVACAEAGVTLISPFVGRILDWHVANTDKKSYEPQEDPGVKSVTKIYNYYKKFGYKTIVMGASFRNTGEIKALAGCDFLTISPKLLGELLKDNTKLAPVLSIKAAQTSDLGKIHLDEKAFRWLHSEDQMAVEKLSDGIRKFAADAIKLERMLTERMFSAENGK</sequence>